<protein>
    <recommendedName>
        <fullName evidence="1">Phosphoenolpyruvate carboxylase</fullName>
        <shortName evidence="1">PEPC</shortName>
        <shortName evidence="1">PEPCase</shortName>
        <ecNumber evidence="1">4.1.1.31</ecNumber>
    </recommendedName>
</protein>
<reference key="1">
    <citation type="journal article" date="1998" name="DNA Res.">
        <title>Complete sequence and gene organization of the genome of a hyper-thermophilic archaebacterium, Pyrococcus horikoshii OT3.</title>
        <authorList>
            <person name="Kawarabayasi Y."/>
            <person name="Sawada M."/>
            <person name="Horikawa H."/>
            <person name="Haikawa Y."/>
            <person name="Hino Y."/>
            <person name="Yamamoto S."/>
            <person name="Sekine M."/>
            <person name="Baba S."/>
            <person name="Kosugi H."/>
            <person name="Hosoyama A."/>
            <person name="Nagai Y."/>
            <person name="Sakai M."/>
            <person name="Ogura K."/>
            <person name="Otsuka R."/>
            <person name="Nakazawa H."/>
            <person name="Takamiya M."/>
            <person name="Ohfuku Y."/>
            <person name="Funahashi T."/>
            <person name="Tanaka T."/>
            <person name="Kudoh Y."/>
            <person name="Yamazaki J."/>
            <person name="Kushida N."/>
            <person name="Oguchi A."/>
            <person name="Aoki K."/>
            <person name="Yoshizawa T."/>
            <person name="Nakamura Y."/>
            <person name="Robb F.T."/>
            <person name="Horikoshi K."/>
            <person name="Masuchi Y."/>
            <person name="Shizuya H."/>
            <person name="Kikuchi H."/>
        </authorList>
    </citation>
    <scope>NUCLEOTIDE SEQUENCE [LARGE SCALE GENOMIC DNA]</scope>
    <source>
        <strain>ATCC 700860 / DSM 12428 / JCM 9974 / NBRC 100139 / OT-3</strain>
    </source>
</reference>
<dbReference type="EC" id="4.1.1.31" evidence="1"/>
<dbReference type="EMBL" id="BA000001">
    <property type="protein sequence ID" value="BAA29084.1"/>
    <property type="status" value="ALT_INIT"/>
    <property type="molecule type" value="Genomic_DNA"/>
</dbReference>
<dbReference type="PIR" id="E71219">
    <property type="entry name" value="E71219"/>
</dbReference>
<dbReference type="RefSeq" id="WP_048053011.1">
    <property type="nucleotide sequence ID" value="NC_000961.1"/>
</dbReference>
<dbReference type="SMR" id="O57764"/>
<dbReference type="STRING" id="70601.gene:9376923"/>
<dbReference type="DNASU" id="1443918"/>
<dbReference type="EnsemblBacteria" id="BAA29084">
    <property type="protein sequence ID" value="BAA29084"/>
    <property type="gene ID" value="BAA29084"/>
</dbReference>
<dbReference type="GeneID" id="1443918"/>
<dbReference type="KEGG" id="pho:PH0016"/>
<dbReference type="eggNOG" id="arCOG04435">
    <property type="taxonomic scope" value="Archaea"/>
</dbReference>
<dbReference type="OrthoDB" id="85849at2157"/>
<dbReference type="Proteomes" id="UP000000752">
    <property type="component" value="Chromosome"/>
</dbReference>
<dbReference type="GO" id="GO:0000287">
    <property type="term" value="F:magnesium ion binding"/>
    <property type="evidence" value="ECO:0007669"/>
    <property type="project" value="UniProtKB-UniRule"/>
</dbReference>
<dbReference type="GO" id="GO:0008964">
    <property type="term" value="F:phosphoenolpyruvate carboxylase activity"/>
    <property type="evidence" value="ECO:0007669"/>
    <property type="project" value="UniProtKB-UniRule"/>
</dbReference>
<dbReference type="GO" id="GO:0015977">
    <property type="term" value="P:carbon fixation"/>
    <property type="evidence" value="ECO:0007669"/>
    <property type="project" value="UniProtKB-UniRule"/>
</dbReference>
<dbReference type="GO" id="GO:0006107">
    <property type="term" value="P:oxaloacetate metabolic process"/>
    <property type="evidence" value="ECO:0007669"/>
    <property type="project" value="UniProtKB-UniRule"/>
</dbReference>
<dbReference type="GO" id="GO:0006099">
    <property type="term" value="P:tricarboxylic acid cycle"/>
    <property type="evidence" value="ECO:0007669"/>
    <property type="project" value="InterPro"/>
</dbReference>
<dbReference type="HAMAP" id="MF_01904">
    <property type="entry name" value="PEPcase_type2"/>
    <property type="match status" value="1"/>
</dbReference>
<dbReference type="InterPro" id="IPR007566">
    <property type="entry name" value="PEP_COase_arc-type"/>
</dbReference>
<dbReference type="InterPro" id="IPR015813">
    <property type="entry name" value="Pyrv/PenolPyrv_kinase-like_dom"/>
</dbReference>
<dbReference type="NCBIfam" id="TIGR02751">
    <property type="entry name" value="PEPCase_arch"/>
    <property type="match status" value="1"/>
</dbReference>
<dbReference type="Pfam" id="PF14010">
    <property type="entry name" value="PEPcase_2"/>
    <property type="match status" value="1"/>
</dbReference>
<dbReference type="PIRSF" id="PIRSF006677">
    <property type="entry name" value="UCP006677"/>
    <property type="match status" value="1"/>
</dbReference>
<dbReference type="SUPFAM" id="SSF51621">
    <property type="entry name" value="Phosphoenolpyruvate/pyruvate domain"/>
    <property type="match status" value="1"/>
</dbReference>
<name>CAPPA_PYRHO</name>
<keyword id="KW-0120">Carbon dioxide fixation</keyword>
<keyword id="KW-0456">Lyase</keyword>
<keyword id="KW-0460">Magnesium</keyword>
<gene>
    <name evidence="1" type="primary">ppcA</name>
    <name type="ordered locus">PH0016</name>
</gene>
<evidence type="ECO:0000255" key="1">
    <source>
        <dbReference type="HAMAP-Rule" id="MF_01904"/>
    </source>
</evidence>
<evidence type="ECO:0000305" key="2"/>
<organism>
    <name type="scientific">Pyrococcus horikoshii (strain ATCC 700860 / DSM 12428 / JCM 9974 / NBRC 100139 / OT-3)</name>
    <dbReference type="NCBI Taxonomy" id="70601"/>
    <lineage>
        <taxon>Archaea</taxon>
        <taxon>Methanobacteriati</taxon>
        <taxon>Methanobacteriota</taxon>
        <taxon>Thermococci</taxon>
        <taxon>Thermococcales</taxon>
        <taxon>Thermococcaceae</taxon>
        <taxon>Pyrococcus</taxon>
    </lineage>
</organism>
<proteinExistence type="inferred from homology"/>
<comment type="function">
    <text evidence="1">Catalyzes the irreversible beta-carboxylation of phosphoenolpyruvate (PEP) to form oxaloacetate (OAA), a four-carbon dicarboxylic acid source for the tricarboxylic acid cycle.</text>
</comment>
<comment type="catalytic activity">
    <reaction evidence="1">
        <text>oxaloacetate + phosphate = phosphoenolpyruvate + hydrogencarbonate</text>
        <dbReference type="Rhea" id="RHEA:28370"/>
        <dbReference type="ChEBI" id="CHEBI:16452"/>
        <dbReference type="ChEBI" id="CHEBI:17544"/>
        <dbReference type="ChEBI" id="CHEBI:43474"/>
        <dbReference type="ChEBI" id="CHEBI:58702"/>
        <dbReference type="EC" id="4.1.1.31"/>
    </reaction>
</comment>
<comment type="cofactor">
    <cofactor evidence="1">
        <name>Mg(2+)</name>
        <dbReference type="ChEBI" id="CHEBI:18420"/>
    </cofactor>
</comment>
<comment type="subunit">
    <text evidence="1">Homotetramer.</text>
</comment>
<comment type="similarity">
    <text evidence="1">Belongs to the PEPCase type 2 family.</text>
</comment>
<comment type="sequence caution" evidence="2">
    <conflict type="erroneous initiation">
        <sequence resource="EMBL-CDS" id="BAA29084"/>
    </conflict>
    <text>Extended N-terminus.</text>
</comment>
<sequence>MIPRIMSTQHPDNYSIPFFASSPILGGEDEITEAFYAFSVLGADEQMWDFEGKEVDEFVVKKLLERYPTFFKENILGEDLRLTPRVPNPSVEKAEAKLLLETLQGITRAADYARVFYLDNIAPIFEVILPMTTSLAEMLRVHELYRKIVSLSGEVIYDVTVKEWIGEFYPKEINVIPLFETKVALLKSGRIIREYIGRKRPEYLRVFFARSDPAMNYGLLSAVTYVKKALEQVGEVEEETSTPIYPIIGVGSPPFRGGMRPENVKKVLKEYPSVQTYTIQSSFKYDHPTKDVVKAVEIVKSKKREAPDPLDIPEFIQLYEIEYQKQLKILAPYIRNIVTRIPDRRKRKLHIGLFGYSRNVGGLSLPRVIKFTASLYSIGLPPELLGLNELSDNQLDSISEYYKNLYDDLEFAMRFFSFKVAERVGLRELSEKVKEFKPDIDDEYVREAELVFRGQGDVMKLAQIRGFLG</sequence>
<accession>O57764</accession>
<feature type="chain" id="PRO_0000309613" description="Phosphoenolpyruvate carboxylase">
    <location>
        <begin position="1"/>
        <end position="469"/>
    </location>
</feature>